<gene>
    <name evidence="1" type="primary">yebF</name>
    <name type="ordered locus">YPTB1655</name>
</gene>
<proteinExistence type="inferred from homology"/>
<dbReference type="EMBL" id="BX936398">
    <property type="protein sequence ID" value="CAH20894.1"/>
    <property type="molecule type" value="Genomic_DNA"/>
</dbReference>
<dbReference type="SMR" id="Q66BW1"/>
<dbReference type="KEGG" id="ypo:BZ17_847"/>
<dbReference type="KEGG" id="yps:YPTB1655"/>
<dbReference type="PATRIC" id="fig|273123.14.peg.900"/>
<dbReference type="Proteomes" id="UP000001011">
    <property type="component" value="Chromosome"/>
</dbReference>
<dbReference type="GO" id="GO:0005576">
    <property type="term" value="C:extracellular region"/>
    <property type="evidence" value="ECO:0007669"/>
    <property type="project" value="UniProtKB-SubCell"/>
</dbReference>
<dbReference type="Gene3D" id="3.10.450.300">
    <property type="entry name" value="YebF/Colicin-M immunity protein"/>
    <property type="match status" value="1"/>
</dbReference>
<dbReference type="HAMAP" id="MF_01435">
    <property type="entry name" value="YebF"/>
    <property type="match status" value="1"/>
</dbReference>
<dbReference type="InterPro" id="IPR020236">
    <property type="entry name" value="Uncharacterised_YebF"/>
</dbReference>
<dbReference type="InterPro" id="IPR038703">
    <property type="entry name" value="YebF/Cmi_sf"/>
</dbReference>
<dbReference type="InterPro" id="IPR025603">
    <property type="entry name" value="YebF/ColM_immunity"/>
</dbReference>
<dbReference type="NCBIfam" id="NF010224">
    <property type="entry name" value="PRK13680.1"/>
    <property type="match status" value="1"/>
</dbReference>
<dbReference type="NCBIfam" id="NF041240">
    <property type="entry name" value="YebF_not_Cmi"/>
    <property type="match status" value="1"/>
</dbReference>
<dbReference type="Pfam" id="PF13995">
    <property type="entry name" value="YebF"/>
    <property type="match status" value="1"/>
</dbReference>
<dbReference type="PROSITE" id="PS51979">
    <property type="entry name" value="YEBF_CMI"/>
    <property type="match status" value="1"/>
</dbReference>
<reference key="1">
    <citation type="journal article" date="2004" name="Proc. Natl. Acad. Sci. U.S.A.">
        <title>Insights into the evolution of Yersinia pestis through whole-genome comparison with Yersinia pseudotuberculosis.</title>
        <authorList>
            <person name="Chain P.S.G."/>
            <person name="Carniel E."/>
            <person name="Larimer F.W."/>
            <person name="Lamerdin J."/>
            <person name="Stoutland P.O."/>
            <person name="Regala W.M."/>
            <person name="Georgescu A.M."/>
            <person name="Vergez L.M."/>
            <person name="Land M.L."/>
            <person name="Motin V.L."/>
            <person name="Brubaker R.R."/>
            <person name="Fowler J."/>
            <person name="Hinnebusch J."/>
            <person name="Marceau M."/>
            <person name="Medigue C."/>
            <person name="Simonet M."/>
            <person name="Chenal-Francisque V."/>
            <person name="Souza B."/>
            <person name="Dacheux D."/>
            <person name="Elliott J.M."/>
            <person name="Derbise A."/>
            <person name="Hauser L.J."/>
            <person name="Garcia E."/>
        </authorList>
    </citation>
    <scope>NUCLEOTIDE SEQUENCE [LARGE SCALE GENOMIC DNA]</scope>
    <source>
        <strain>IP32953</strain>
    </source>
</reference>
<feature type="signal peptide" evidence="1">
    <location>
        <begin position="1"/>
        <end position="23"/>
    </location>
</feature>
<feature type="chain" id="PRO_0000045959" description="Protein YebF">
    <location>
        <begin position="24"/>
        <end position="136"/>
    </location>
</feature>
<feature type="domain" description="YebF/Cmi" evidence="2">
    <location>
        <begin position="30"/>
        <end position="117"/>
    </location>
</feature>
<feature type="region of interest" description="Disordered" evidence="3">
    <location>
        <begin position="117"/>
        <end position="136"/>
    </location>
</feature>
<feature type="disulfide bond" evidence="2">
    <location>
        <begin position="34"/>
        <end position="107"/>
    </location>
</feature>
<sequence>MKKTGLALVLATILLGMMGSVHAQEPRVVKVPACIGLNQSQVATQVKRDFLQNRIPRWEADKKQLGTDKPVVWINVVDIIGKDDIWQVPLIARGNKGDKTYQVVLDCKSGTMTYTGLNAQTRPDPQIGLNSQAGPK</sequence>
<evidence type="ECO:0000255" key="1">
    <source>
        <dbReference type="HAMAP-Rule" id="MF_01435"/>
    </source>
</evidence>
<evidence type="ECO:0000255" key="2">
    <source>
        <dbReference type="PROSITE-ProRule" id="PRU01323"/>
    </source>
</evidence>
<evidence type="ECO:0000256" key="3">
    <source>
        <dbReference type="SAM" id="MobiDB-lite"/>
    </source>
</evidence>
<protein>
    <recommendedName>
        <fullName evidence="1">Protein YebF</fullName>
    </recommendedName>
</protein>
<comment type="subcellular location">
    <subcellularLocation>
        <location evidence="1">Secreted</location>
    </subcellularLocation>
</comment>
<comment type="similarity">
    <text evidence="1">Belongs to the YebF family.</text>
</comment>
<keyword id="KW-1015">Disulfide bond</keyword>
<keyword id="KW-0964">Secreted</keyword>
<keyword id="KW-0732">Signal</keyword>
<accession>Q66BW1</accession>
<organism>
    <name type="scientific">Yersinia pseudotuberculosis serotype I (strain IP32953)</name>
    <dbReference type="NCBI Taxonomy" id="273123"/>
    <lineage>
        <taxon>Bacteria</taxon>
        <taxon>Pseudomonadati</taxon>
        <taxon>Pseudomonadota</taxon>
        <taxon>Gammaproteobacteria</taxon>
        <taxon>Enterobacterales</taxon>
        <taxon>Yersiniaceae</taxon>
        <taxon>Yersinia</taxon>
    </lineage>
</organism>
<name>YEBF_YERPS</name>